<gene>
    <name type="primary">Ift52</name>
    <name type="synonym">Ngd5</name>
</gene>
<organism>
    <name type="scientific">Mus musculus</name>
    <name type="common">Mouse</name>
    <dbReference type="NCBI Taxonomy" id="10090"/>
    <lineage>
        <taxon>Eukaryota</taxon>
        <taxon>Metazoa</taxon>
        <taxon>Chordata</taxon>
        <taxon>Craniata</taxon>
        <taxon>Vertebrata</taxon>
        <taxon>Euteleostomi</taxon>
        <taxon>Mammalia</taxon>
        <taxon>Eutheria</taxon>
        <taxon>Euarchontoglires</taxon>
        <taxon>Glires</taxon>
        <taxon>Rodentia</taxon>
        <taxon>Myomorpha</taxon>
        <taxon>Muroidea</taxon>
        <taxon>Muridae</taxon>
        <taxon>Murinae</taxon>
        <taxon>Mus</taxon>
        <taxon>Mus</taxon>
    </lineage>
</organism>
<proteinExistence type="evidence at protein level"/>
<evidence type="ECO:0000250" key="1">
    <source>
        <dbReference type="UniProtKB" id="Q9Y366"/>
    </source>
</evidence>
<evidence type="ECO:0000269" key="2">
    <source>
    </source>
</evidence>
<evidence type="ECO:0000269" key="3">
    <source>
    </source>
</evidence>
<evidence type="ECO:0000269" key="4">
    <source>
    </source>
</evidence>
<evidence type="ECO:0000269" key="5">
    <source>
    </source>
</evidence>
<evidence type="ECO:0000305" key="6"/>
<evidence type="ECO:0007829" key="7">
    <source>
        <dbReference type="PDB" id="5FMS"/>
    </source>
</evidence>
<comment type="function">
    <text evidence="1 2">Involved in ciliogenesis as part of a complex involved in intraflagellar transport (IFT), the bi-directional movement of particles required for the assembly, maintenance and functioning of primary cilia (PubMed:19253336). Required for the anterograde transport of IFT88 (By similarity).</text>
</comment>
<comment type="subunit">
    <text evidence="1 2 3 4">Component of the IFT complex B, at least composed of IFT20, IFT22, IFT25, IFT27, IFT46, IFT52, TRAF3IP1/IFT54, IFT57, IFT74, IFT80, IFT81, and IFT88 (PubMed:19253336). Interacts with IFT88 (PubMed:19253336). Interacts with TTC25 (PubMed:25860617). Interacts with TTC21A (By similarity). Interacts with IFT70A1, IFT70A2, IFT70B and KIF17 (PubMed:23810713). Interacts with USH1G (By similarity).</text>
</comment>
<comment type="interaction">
    <interactant intactId="EBI-6959048">
        <id>Q62559</id>
    </interactant>
    <interactant intactId="EBI-6958994">
        <id>Q8N4P2</id>
        <label>IFT70B</label>
    </interactant>
    <organismsDiffer>true</organismsDiffer>
    <experiments>2</experiments>
</comment>
<comment type="subcellular location">
    <subcellularLocation>
        <location evidence="2 5">Cell projection</location>
        <location evidence="2 5">Cilium</location>
    </subcellularLocation>
</comment>
<comment type="induction">
    <text>After opioid treatment, expression decreases.</text>
</comment>
<comment type="sequence caution" evidence="6">
    <conflict type="frameshift">
        <sequence resource="EMBL-CDS" id="AAA96241"/>
    </conflict>
</comment>
<reference key="1">
    <citation type="journal article" date="1995" name="Brain Res. Mol. Brain Res.">
        <title>Molecular cloning of a novel protein regulated by opioid treatment of NG108-15 cells.</title>
        <authorList>
            <person name="Wick M.J."/>
            <person name="Ann D.K."/>
            <person name="Loh H.H."/>
        </authorList>
    </citation>
    <scope>NUCLEOTIDE SEQUENCE [MRNA]</scope>
    <source>
        <tissue>Neuroblastoma</tissue>
    </source>
</reference>
<reference key="2">
    <citation type="journal article" date="2005" name="Science">
        <title>The transcriptional landscape of the mammalian genome.</title>
        <authorList>
            <person name="Carninci P."/>
            <person name="Kasukawa T."/>
            <person name="Katayama S."/>
            <person name="Gough J."/>
            <person name="Frith M.C."/>
            <person name="Maeda N."/>
            <person name="Oyama R."/>
            <person name="Ravasi T."/>
            <person name="Lenhard B."/>
            <person name="Wells C."/>
            <person name="Kodzius R."/>
            <person name="Shimokawa K."/>
            <person name="Bajic V.B."/>
            <person name="Brenner S.E."/>
            <person name="Batalov S."/>
            <person name="Forrest A.R."/>
            <person name="Zavolan M."/>
            <person name="Davis M.J."/>
            <person name="Wilming L.G."/>
            <person name="Aidinis V."/>
            <person name="Allen J.E."/>
            <person name="Ambesi-Impiombato A."/>
            <person name="Apweiler R."/>
            <person name="Aturaliya R.N."/>
            <person name="Bailey T.L."/>
            <person name="Bansal M."/>
            <person name="Baxter L."/>
            <person name="Beisel K.W."/>
            <person name="Bersano T."/>
            <person name="Bono H."/>
            <person name="Chalk A.M."/>
            <person name="Chiu K.P."/>
            <person name="Choudhary V."/>
            <person name="Christoffels A."/>
            <person name="Clutterbuck D.R."/>
            <person name="Crowe M.L."/>
            <person name="Dalla E."/>
            <person name="Dalrymple B.P."/>
            <person name="de Bono B."/>
            <person name="Della Gatta G."/>
            <person name="di Bernardo D."/>
            <person name="Down T."/>
            <person name="Engstrom P."/>
            <person name="Fagiolini M."/>
            <person name="Faulkner G."/>
            <person name="Fletcher C.F."/>
            <person name="Fukushima T."/>
            <person name="Furuno M."/>
            <person name="Futaki S."/>
            <person name="Gariboldi M."/>
            <person name="Georgii-Hemming P."/>
            <person name="Gingeras T.R."/>
            <person name="Gojobori T."/>
            <person name="Green R.E."/>
            <person name="Gustincich S."/>
            <person name="Harbers M."/>
            <person name="Hayashi Y."/>
            <person name="Hensch T.K."/>
            <person name="Hirokawa N."/>
            <person name="Hill D."/>
            <person name="Huminiecki L."/>
            <person name="Iacono M."/>
            <person name="Ikeo K."/>
            <person name="Iwama A."/>
            <person name="Ishikawa T."/>
            <person name="Jakt M."/>
            <person name="Kanapin A."/>
            <person name="Katoh M."/>
            <person name="Kawasawa Y."/>
            <person name="Kelso J."/>
            <person name="Kitamura H."/>
            <person name="Kitano H."/>
            <person name="Kollias G."/>
            <person name="Krishnan S.P."/>
            <person name="Kruger A."/>
            <person name="Kummerfeld S.K."/>
            <person name="Kurochkin I.V."/>
            <person name="Lareau L.F."/>
            <person name="Lazarevic D."/>
            <person name="Lipovich L."/>
            <person name="Liu J."/>
            <person name="Liuni S."/>
            <person name="McWilliam S."/>
            <person name="Madan Babu M."/>
            <person name="Madera M."/>
            <person name="Marchionni L."/>
            <person name="Matsuda H."/>
            <person name="Matsuzawa S."/>
            <person name="Miki H."/>
            <person name="Mignone F."/>
            <person name="Miyake S."/>
            <person name="Morris K."/>
            <person name="Mottagui-Tabar S."/>
            <person name="Mulder N."/>
            <person name="Nakano N."/>
            <person name="Nakauchi H."/>
            <person name="Ng P."/>
            <person name="Nilsson R."/>
            <person name="Nishiguchi S."/>
            <person name="Nishikawa S."/>
            <person name="Nori F."/>
            <person name="Ohara O."/>
            <person name="Okazaki Y."/>
            <person name="Orlando V."/>
            <person name="Pang K.C."/>
            <person name="Pavan W.J."/>
            <person name="Pavesi G."/>
            <person name="Pesole G."/>
            <person name="Petrovsky N."/>
            <person name="Piazza S."/>
            <person name="Reed J."/>
            <person name="Reid J.F."/>
            <person name="Ring B.Z."/>
            <person name="Ringwald M."/>
            <person name="Rost B."/>
            <person name="Ruan Y."/>
            <person name="Salzberg S.L."/>
            <person name="Sandelin A."/>
            <person name="Schneider C."/>
            <person name="Schoenbach C."/>
            <person name="Sekiguchi K."/>
            <person name="Semple C.A."/>
            <person name="Seno S."/>
            <person name="Sessa L."/>
            <person name="Sheng Y."/>
            <person name="Shibata Y."/>
            <person name="Shimada H."/>
            <person name="Shimada K."/>
            <person name="Silva D."/>
            <person name="Sinclair B."/>
            <person name="Sperling S."/>
            <person name="Stupka E."/>
            <person name="Sugiura K."/>
            <person name="Sultana R."/>
            <person name="Takenaka Y."/>
            <person name="Taki K."/>
            <person name="Tammoja K."/>
            <person name="Tan S.L."/>
            <person name="Tang S."/>
            <person name="Taylor M.S."/>
            <person name="Tegner J."/>
            <person name="Teichmann S.A."/>
            <person name="Ueda H.R."/>
            <person name="van Nimwegen E."/>
            <person name="Verardo R."/>
            <person name="Wei C.L."/>
            <person name="Yagi K."/>
            <person name="Yamanishi H."/>
            <person name="Zabarovsky E."/>
            <person name="Zhu S."/>
            <person name="Zimmer A."/>
            <person name="Hide W."/>
            <person name="Bult C."/>
            <person name="Grimmond S.M."/>
            <person name="Teasdale R.D."/>
            <person name="Liu E.T."/>
            <person name="Brusic V."/>
            <person name="Quackenbush J."/>
            <person name="Wahlestedt C."/>
            <person name="Mattick J.S."/>
            <person name="Hume D.A."/>
            <person name="Kai C."/>
            <person name="Sasaki D."/>
            <person name="Tomaru Y."/>
            <person name="Fukuda S."/>
            <person name="Kanamori-Katayama M."/>
            <person name="Suzuki M."/>
            <person name="Aoki J."/>
            <person name="Arakawa T."/>
            <person name="Iida J."/>
            <person name="Imamura K."/>
            <person name="Itoh M."/>
            <person name="Kato T."/>
            <person name="Kawaji H."/>
            <person name="Kawagashira N."/>
            <person name="Kawashima T."/>
            <person name="Kojima M."/>
            <person name="Kondo S."/>
            <person name="Konno H."/>
            <person name="Nakano K."/>
            <person name="Ninomiya N."/>
            <person name="Nishio T."/>
            <person name="Okada M."/>
            <person name="Plessy C."/>
            <person name="Shibata K."/>
            <person name="Shiraki T."/>
            <person name="Suzuki S."/>
            <person name="Tagami M."/>
            <person name="Waki K."/>
            <person name="Watahiki A."/>
            <person name="Okamura-Oho Y."/>
            <person name="Suzuki H."/>
            <person name="Kawai J."/>
            <person name="Hayashizaki Y."/>
        </authorList>
    </citation>
    <scope>NUCLEOTIDE SEQUENCE [LARGE SCALE MRNA]</scope>
    <source>
        <strain>C57BL/6J</strain>
        <strain>NOD</strain>
        <tissue>Thymus</tissue>
    </source>
</reference>
<reference key="3">
    <citation type="journal article" date="2004" name="Genome Res.">
        <title>The status, quality, and expansion of the NIH full-length cDNA project: the Mammalian Gene Collection (MGC).</title>
        <authorList>
            <consortium name="The MGC Project Team"/>
        </authorList>
    </citation>
    <scope>NUCLEOTIDE SEQUENCE [LARGE SCALE MRNA]</scope>
    <source>
        <strain>FVB/N</strain>
        <tissue>Kidney</tissue>
    </source>
</reference>
<reference key="4">
    <citation type="journal article" date="2009" name="Cell Motil. Cytoskeleton">
        <title>Characterization of mouse IFT complex B.</title>
        <authorList>
            <person name="Follit J.A."/>
            <person name="Xu F."/>
            <person name="Keady B.T."/>
            <person name="Pazour G.J."/>
        </authorList>
    </citation>
    <scope>FUNCTION</scope>
    <scope>IDENTIFICATION IN THE IFT COMPLEX B</scope>
    <scope>INTERACTION WITH IFT88</scope>
    <scope>SUBCELLULAR LOCATION</scope>
</reference>
<reference key="5">
    <citation type="journal article" date="2010" name="Cell">
        <title>A tissue-specific atlas of mouse protein phosphorylation and expression.</title>
        <authorList>
            <person name="Huttlin E.L."/>
            <person name="Jedrychowski M.P."/>
            <person name="Elias J.E."/>
            <person name="Goswami T."/>
            <person name="Rad R."/>
            <person name="Beausoleil S.A."/>
            <person name="Villen J."/>
            <person name="Haas W."/>
            <person name="Sowa M.E."/>
            <person name="Gygi S.P."/>
        </authorList>
    </citation>
    <scope>IDENTIFICATION BY MASS SPECTROMETRY [LARGE SCALE ANALYSIS]</scope>
    <source>
        <tissue>Testis</tissue>
    </source>
</reference>
<reference key="6">
    <citation type="journal article" date="2013" name="Exp. Cell Res.">
        <title>Interaction of mouse TTC30/DYF-1 with multiple intraflagellar transport complex B proteins and KIF17.</title>
        <authorList>
            <person name="Howard P.W."/>
            <person name="Jue S.F."/>
            <person name="Maurer R.A."/>
        </authorList>
    </citation>
    <scope>INTERACTION WITH IFT70A1; IFT70A2; IFT70B AND KIF17</scope>
</reference>
<reference key="7">
    <citation type="journal article" date="2015" name="PLoS ONE">
        <title>Characterization of tetratricopeptide repeat-containing proteins critical for cilia formation and function.</title>
        <authorList>
            <person name="Xu Y."/>
            <person name="Cao J."/>
            <person name="Huang S."/>
            <person name="Feng D."/>
            <person name="Zhang W."/>
            <person name="Zhu X."/>
            <person name="Yan X."/>
        </authorList>
    </citation>
    <scope>INTERACTION WITH TTC25</scope>
</reference>
<reference key="8">
    <citation type="journal article" date="2019" name="Front. Cell Dev. Biol.">
        <title>SANS (USH1G) Molecularly Links the Human Usher Syndrome Protein Network to the Intraflagellar Transport Module by Direct Binding to IFT-B Proteins.</title>
        <authorList>
            <person name="Sorusch N."/>
            <person name="Yildirim A."/>
            <person name="Knapp B."/>
            <person name="Janson J."/>
            <person name="Fleck W."/>
            <person name="Scharf C."/>
            <person name="Wolfrum U."/>
        </authorList>
    </citation>
    <scope>SUBCELLULAR LOCATION</scope>
</reference>
<feature type="chain" id="PRO_0000084168" description="Intraflagellar transport protein 52 homolog">
    <location>
        <begin position="1"/>
        <end position="426"/>
    </location>
</feature>
<feature type="sequence conflict" description="In Ref. 3; AAH37708." evidence="6" ref="3">
    <original>R</original>
    <variation>M</variation>
    <location>
        <position position="385"/>
    </location>
</feature>
<feature type="strand" evidence="7">
    <location>
        <begin position="9"/>
        <end position="12"/>
    </location>
</feature>
<feature type="helix" evidence="7">
    <location>
        <begin position="26"/>
        <end position="32"/>
    </location>
</feature>
<feature type="turn" evidence="7">
    <location>
        <begin position="33"/>
        <end position="35"/>
    </location>
</feature>
<feature type="strand" evidence="7">
    <location>
        <begin position="38"/>
        <end position="41"/>
    </location>
</feature>
<feature type="turn" evidence="7">
    <location>
        <begin position="47"/>
        <end position="50"/>
    </location>
</feature>
<feature type="strand" evidence="7">
    <location>
        <begin position="54"/>
        <end position="60"/>
    </location>
</feature>
<feature type="helix" evidence="7">
    <location>
        <begin position="67"/>
        <end position="78"/>
    </location>
</feature>
<feature type="strand" evidence="7">
    <location>
        <begin position="82"/>
        <end position="86"/>
    </location>
</feature>
<feature type="turn" evidence="7">
    <location>
        <begin position="89"/>
        <end position="91"/>
    </location>
</feature>
<feature type="helix" evidence="7">
    <location>
        <begin position="92"/>
        <end position="95"/>
    </location>
</feature>
<feature type="helix" evidence="7">
    <location>
        <begin position="100"/>
        <end position="103"/>
    </location>
</feature>
<feature type="turn" evidence="7">
    <location>
        <begin position="104"/>
        <end position="107"/>
    </location>
</feature>
<feature type="strand" evidence="7">
    <location>
        <begin position="108"/>
        <end position="110"/>
    </location>
</feature>
<feature type="strand" evidence="7">
    <location>
        <begin position="116"/>
        <end position="119"/>
    </location>
</feature>
<feature type="strand" evidence="7">
    <location>
        <begin position="128"/>
        <end position="133"/>
    </location>
</feature>
<feature type="helix" evidence="7">
    <location>
        <begin position="138"/>
        <end position="140"/>
    </location>
</feature>
<feature type="strand" evidence="7">
    <location>
        <begin position="166"/>
        <end position="170"/>
    </location>
</feature>
<feature type="strand" evidence="7">
    <location>
        <begin position="174"/>
        <end position="176"/>
    </location>
</feature>
<feature type="strand" evidence="7">
    <location>
        <begin position="180"/>
        <end position="185"/>
    </location>
</feature>
<feature type="strand" evidence="7">
    <location>
        <begin position="188"/>
        <end position="192"/>
    </location>
</feature>
<feature type="strand" evidence="7">
    <location>
        <begin position="196"/>
        <end position="201"/>
    </location>
</feature>
<feature type="turn" evidence="7">
    <location>
        <begin position="205"/>
        <end position="207"/>
    </location>
</feature>
<feature type="strand" evidence="7">
    <location>
        <begin position="210"/>
        <end position="215"/>
    </location>
</feature>
<feature type="helix" evidence="7">
    <location>
        <begin position="217"/>
        <end position="220"/>
    </location>
</feature>
<feature type="helix" evidence="7">
    <location>
        <begin position="222"/>
        <end position="225"/>
    </location>
</feature>
<feature type="helix" evidence="7">
    <location>
        <begin position="230"/>
        <end position="241"/>
    </location>
</feature>
<keyword id="KW-0002">3D-structure</keyword>
<keyword id="KW-0966">Cell projection</keyword>
<keyword id="KW-0969">Cilium</keyword>
<keyword id="KW-0970">Cilium biogenesis/degradation</keyword>
<keyword id="KW-1185">Reference proteome</keyword>
<name>IFT52_MOUSE</name>
<protein>
    <recommendedName>
        <fullName>Intraflagellar transport protein 52 homolog</fullName>
    </recommendedName>
    <alternativeName>
        <fullName>Protein NGD5</fullName>
    </alternativeName>
</protein>
<accession>Q62559</accession>
<accession>Q3TK21</accession>
<accession>Q8BTX3</accession>
<accession>Q8CI16</accession>
<sequence>MEKELRSTILFNAYKKEVFTTNTGYKSLQKRLRSNWKIQSLKDEITSEKLIGVKLWITAGPREKFTAAEFEVLKKYLDSGGDILVMLGEGGESRFDTNINFLLEEYGIMVNNDAVVRNVYYKYFHPKEALVSDGVLNREISRAAGKAVPGVIDEENSGNNAQALTFVYPFGATLSVMKPAVAVLSTGSVCFPLNRPILAFYHSKNQGFGKLAVLGSCHMFSDQYLDKEENSKIMDVVFQWLTTGDIHLNQIDAEDPEISDYTMVPDTATLSEQLRVCLQEGDENPRDFTTLFDLSIYQLDTTCLPKVIKAHEELNVKHEPLQLVQPQFEMPLPALQPAVFPPSFRELPPPPLELFDLDETFSSEKARLAQITNKCTDEDLEFYVRKCGDILGVTSKLPKDQQDAKHILEHIFFQVVEFKKLNQEAH</sequence>
<dbReference type="EMBL" id="L38481">
    <property type="protein sequence ID" value="AAA96241.1"/>
    <property type="status" value="ALT_FRAME"/>
    <property type="molecule type" value="mRNA"/>
</dbReference>
<dbReference type="EMBL" id="AK088467">
    <property type="protein sequence ID" value="BAC40371.1"/>
    <property type="molecule type" value="mRNA"/>
</dbReference>
<dbReference type="EMBL" id="AK144188">
    <property type="protein sequence ID" value="BAE25755.1"/>
    <property type="molecule type" value="mRNA"/>
</dbReference>
<dbReference type="EMBL" id="AK167194">
    <property type="protein sequence ID" value="BAE39324.1"/>
    <property type="molecule type" value="mRNA"/>
</dbReference>
<dbReference type="EMBL" id="BC037708">
    <property type="protein sequence ID" value="AAH37708.1"/>
    <property type="molecule type" value="mRNA"/>
</dbReference>
<dbReference type="CCDS" id="CCDS17005.1"/>
<dbReference type="RefSeq" id="NP_001343451.1">
    <property type="nucleotide sequence ID" value="NM_001356522.1"/>
</dbReference>
<dbReference type="RefSeq" id="NP_742162.2">
    <property type="nucleotide sequence ID" value="NM_172150.4"/>
</dbReference>
<dbReference type="RefSeq" id="XP_006499604.1">
    <property type="nucleotide sequence ID" value="XM_006499541.3"/>
</dbReference>
<dbReference type="PDB" id="5FMS">
    <property type="method" value="X-ray"/>
    <property type="resolution" value="3.49 A"/>
    <property type="chains" value="A/B/C=1-268"/>
</dbReference>
<dbReference type="PDBsum" id="5FMS"/>
<dbReference type="SMR" id="Q62559"/>
<dbReference type="BioGRID" id="232843">
    <property type="interactions" value="1"/>
</dbReference>
<dbReference type="ComplexPortal" id="CPX-5028">
    <property type="entry name" value="Intraflagellar transport complex B"/>
</dbReference>
<dbReference type="FunCoup" id="Q62559">
    <property type="interactions" value="1309"/>
</dbReference>
<dbReference type="IntAct" id="Q62559">
    <property type="interactions" value="1"/>
</dbReference>
<dbReference type="MINT" id="Q62559"/>
<dbReference type="STRING" id="10090.ENSMUSP00000018002"/>
<dbReference type="TCDB" id="1.X.1.1.3">
    <property type="family name" value="the intraflagellar transporter-a complex (ift-a) family"/>
</dbReference>
<dbReference type="iPTMnet" id="Q62559"/>
<dbReference type="PhosphoSitePlus" id="Q62559"/>
<dbReference type="SwissPalm" id="Q62559"/>
<dbReference type="PaxDb" id="10090-ENSMUSP00000018002"/>
<dbReference type="ProteomicsDB" id="269530"/>
<dbReference type="Pumba" id="Q62559"/>
<dbReference type="Antibodypedia" id="43646">
    <property type="antibodies" value="35 antibodies from 17 providers"/>
</dbReference>
<dbReference type="DNASU" id="245866"/>
<dbReference type="Ensembl" id="ENSMUST00000018002.13">
    <property type="protein sequence ID" value="ENSMUSP00000018002.7"/>
    <property type="gene ID" value="ENSMUSG00000017858.13"/>
</dbReference>
<dbReference type="GeneID" id="245866"/>
<dbReference type="KEGG" id="mmu:245866"/>
<dbReference type="UCSC" id="uc008nsj.1">
    <property type="organism name" value="mouse"/>
</dbReference>
<dbReference type="AGR" id="MGI:2387217"/>
<dbReference type="CTD" id="51098"/>
<dbReference type="MGI" id="MGI:2387217">
    <property type="gene designation" value="Ift52"/>
</dbReference>
<dbReference type="VEuPathDB" id="HostDB:ENSMUSG00000017858"/>
<dbReference type="eggNOG" id="KOG3861">
    <property type="taxonomic scope" value="Eukaryota"/>
</dbReference>
<dbReference type="GeneTree" id="ENSGT00390000011581"/>
<dbReference type="HOGENOM" id="CLU_027692_0_0_1"/>
<dbReference type="InParanoid" id="Q62559"/>
<dbReference type="OMA" id="NWNVEQN"/>
<dbReference type="OrthoDB" id="10259368at2759"/>
<dbReference type="PhylomeDB" id="Q62559"/>
<dbReference type="TreeFam" id="TF105916"/>
<dbReference type="Reactome" id="R-MMU-5610787">
    <property type="pathway name" value="Hedgehog 'off' state"/>
</dbReference>
<dbReference type="Reactome" id="R-MMU-5620924">
    <property type="pathway name" value="Intraflagellar transport"/>
</dbReference>
<dbReference type="BioGRID-ORCS" id="245866">
    <property type="hits" value="4 hits in 77 CRISPR screens"/>
</dbReference>
<dbReference type="ChiTaRS" id="Ift52">
    <property type="organism name" value="mouse"/>
</dbReference>
<dbReference type="PRO" id="PR:Q62559"/>
<dbReference type="Proteomes" id="UP000000589">
    <property type="component" value="Chromosome 2"/>
</dbReference>
<dbReference type="RNAct" id="Q62559">
    <property type="molecule type" value="protein"/>
</dbReference>
<dbReference type="Bgee" id="ENSMUSG00000017858">
    <property type="expression patterns" value="Expressed in dorsal pancreas and 233 other cell types or tissues"/>
</dbReference>
<dbReference type="ExpressionAtlas" id="Q62559">
    <property type="expression patterns" value="baseline and differential"/>
</dbReference>
<dbReference type="GO" id="GO:0005814">
    <property type="term" value="C:centriole"/>
    <property type="evidence" value="ECO:0000314"/>
    <property type="project" value="MGI"/>
</dbReference>
<dbReference type="GO" id="GO:0005813">
    <property type="term" value="C:centrosome"/>
    <property type="evidence" value="ECO:0000314"/>
    <property type="project" value="MGI"/>
</dbReference>
<dbReference type="GO" id="GO:0036064">
    <property type="term" value="C:ciliary basal body"/>
    <property type="evidence" value="ECO:0000314"/>
    <property type="project" value="MGI"/>
</dbReference>
<dbReference type="GO" id="GO:0097546">
    <property type="term" value="C:ciliary base"/>
    <property type="evidence" value="ECO:0000314"/>
    <property type="project" value="MGI"/>
</dbReference>
<dbReference type="GO" id="GO:0097542">
    <property type="term" value="C:ciliary tip"/>
    <property type="evidence" value="ECO:0000314"/>
    <property type="project" value="MGI"/>
</dbReference>
<dbReference type="GO" id="GO:0005929">
    <property type="term" value="C:cilium"/>
    <property type="evidence" value="ECO:0000314"/>
    <property type="project" value="MGI"/>
</dbReference>
<dbReference type="GO" id="GO:0044292">
    <property type="term" value="C:dendrite terminus"/>
    <property type="evidence" value="ECO:0000314"/>
    <property type="project" value="MGI"/>
</dbReference>
<dbReference type="GO" id="GO:0030992">
    <property type="term" value="C:intraciliary transport particle B"/>
    <property type="evidence" value="ECO:0000314"/>
    <property type="project" value="UniProtKB"/>
</dbReference>
<dbReference type="GO" id="GO:0097733">
    <property type="term" value="C:photoreceptor cell cilium"/>
    <property type="evidence" value="ECO:0000314"/>
    <property type="project" value="MGI"/>
</dbReference>
<dbReference type="GO" id="GO:0032391">
    <property type="term" value="C:photoreceptor connecting cilium"/>
    <property type="evidence" value="ECO:0000314"/>
    <property type="project" value="MGI"/>
</dbReference>
<dbReference type="GO" id="GO:0060271">
    <property type="term" value="P:cilium assembly"/>
    <property type="evidence" value="ECO:0000303"/>
    <property type="project" value="ComplexPortal"/>
</dbReference>
<dbReference type="GO" id="GO:0007368">
    <property type="term" value="P:determination of left/right symmetry"/>
    <property type="evidence" value="ECO:0000315"/>
    <property type="project" value="MGI"/>
</dbReference>
<dbReference type="GO" id="GO:0009953">
    <property type="term" value="P:dorsal/ventral pattern formation"/>
    <property type="evidence" value="ECO:0000315"/>
    <property type="project" value="MGI"/>
</dbReference>
<dbReference type="GO" id="GO:0042733">
    <property type="term" value="P:embryonic digit morphogenesis"/>
    <property type="evidence" value="ECO:0000315"/>
    <property type="project" value="MGI"/>
</dbReference>
<dbReference type="GO" id="GO:0001947">
    <property type="term" value="P:heart looping"/>
    <property type="evidence" value="ECO:0000315"/>
    <property type="project" value="MGI"/>
</dbReference>
<dbReference type="GO" id="GO:0035720">
    <property type="term" value="P:intraciliary anterograde transport"/>
    <property type="evidence" value="ECO:0000303"/>
    <property type="project" value="ComplexPortal"/>
</dbReference>
<dbReference type="GO" id="GO:0042073">
    <property type="term" value="P:intraciliary transport"/>
    <property type="evidence" value="ECO:0000305"/>
    <property type="project" value="MGI"/>
</dbReference>
<dbReference type="GO" id="GO:0043616">
    <property type="term" value="P:keratinocyte proliferation"/>
    <property type="evidence" value="ECO:0000315"/>
    <property type="project" value="MGI"/>
</dbReference>
<dbReference type="GO" id="GO:0010839">
    <property type="term" value="P:negative regulation of keratinocyte proliferation"/>
    <property type="evidence" value="ECO:0000315"/>
    <property type="project" value="MGI"/>
</dbReference>
<dbReference type="GO" id="GO:0001841">
    <property type="term" value="P:neural tube formation"/>
    <property type="evidence" value="ECO:0000315"/>
    <property type="project" value="MGI"/>
</dbReference>
<dbReference type="GO" id="GO:1905515">
    <property type="term" value="P:non-motile cilium assembly"/>
    <property type="evidence" value="ECO:0000315"/>
    <property type="project" value="MGI"/>
</dbReference>
<dbReference type="GO" id="GO:0070613">
    <property type="term" value="P:regulation of protein processing"/>
    <property type="evidence" value="ECO:0000315"/>
    <property type="project" value="MGI"/>
</dbReference>
<dbReference type="GO" id="GO:0007224">
    <property type="term" value="P:smoothened signaling pathway"/>
    <property type="evidence" value="ECO:0000315"/>
    <property type="project" value="MGI"/>
</dbReference>
<dbReference type="CDD" id="cd23683">
    <property type="entry name" value="IFT52_CTD"/>
    <property type="match status" value="1"/>
</dbReference>
<dbReference type="Gene3D" id="6.10.250.2800">
    <property type="match status" value="1"/>
</dbReference>
<dbReference type="InterPro" id="IPR039975">
    <property type="entry name" value="IFT52"/>
</dbReference>
<dbReference type="InterPro" id="IPR055460">
    <property type="entry name" value="IFT52_central"/>
</dbReference>
<dbReference type="InterPro" id="IPR055458">
    <property type="entry name" value="IFT52_GIFT"/>
</dbReference>
<dbReference type="InterPro" id="IPR048643">
    <property type="entry name" value="Itf52_C"/>
</dbReference>
<dbReference type="PANTHER" id="PTHR12969:SF7">
    <property type="entry name" value="INTRAFLAGELLAR TRANSPORT PROTEIN 52 HOMOLOG"/>
    <property type="match status" value="1"/>
</dbReference>
<dbReference type="PANTHER" id="PTHR12969">
    <property type="entry name" value="NGD5/OSM-6/IFT52"/>
    <property type="match status" value="1"/>
</dbReference>
<dbReference type="Pfam" id="PF23352">
    <property type="entry name" value="IFT52_central"/>
    <property type="match status" value="1"/>
</dbReference>
<dbReference type="Pfam" id="PF23355">
    <property type="entry name" value="IFT52_GIFT"/>
    <property type="match status" value="1"/>
</dbReference>
<dbReference type="Pfam" id="PF21178">
    <property type="entry name" value="Itf52_C"/>
    <property type="match status" value="1"/>
</dbReference>